<feature type="signal peptide" evidence="2">
    <location>
        <begin position="1"/>
        <end position="22"/>
    </location>
</feature>
<feature type="propeptide" id="PRO_0000034946" evidence="1">
    <location>
        <begin position="23"/>
        <end position="42"/>
    </location>
</feature>
<feature type="peptide" id="PRO_0000034947" description="Omega-conotoxin-like 12">
    <location>
        <begin position="43"/>
        <end position="78"/>
    </location>
</feature>
<feature type="disulfide bond" evidence="1">
    <location>
        <begin position="46"/>
        <end position="62"/>
    </location>
</feature>
<feature type="disulfide bond" evidence="1">
    <location>
        <begin position="53"/>
        <end position="65"/>
    </location>
</feature>
<feature type="disulfide bond" evidence="1">
    <location>
        <begin position="61"/>
        <end position="72"/>
    </location>
</feature>
<comment type="function">
    <text evidence="1">Omega-conotoxins act at presynaptic membranes, they bind and block voltage-gated calcium channels (Cav).</text>
</comment>
<comment type="subcellular location">
    <subcellularLocation>
        <location evidence="1">Secreted</location>
    </subcellularLocation>
</comment>
<comment type="tissue specificity">
    <text>Expressed by the venom duct.</text>
</comment>
<comment type="domain">
    <text evidence="1">The presence of a 'disulfide through disulfide knot' structurally defines this protein as a knottin.</text>
</comment>
<comment type="domain">
    <text>The cysteine framework is VI/VII (C-C-CC-C-C).</text>
</comment>
<comment type="similarity">
    <text evidence="3">Belongs to the conotoxin O1 superfamily.</text>
</comment>
<dbReference type="EMBL" id="AJ851172">
    <property type="protein sequence ID" value="CAH64845.1"/>
    <property type="molecule type" value="mRNA"/>
</dbReference>
<dbReference type="SMR" id="Q5K0D6"/>
<dbReference type="ConoServer" id="1061">
    <property type="toxin name" value="SO4 precursor"/>
</dbReference>
<dbReference type="GO" id="GO:0005576">
    <property type="term" value="C:extracellular region"/>
    <property type="evidence" value="ECO:0007669"/>
    <property type="project" value="UniProtKB-SubCell"/>
</dbReference>
<dbReference type="GO" id="GO:0044231">
    <property type="term" value="C:host cell presynaptic membrane"/>
    <property type="evidence" value="ECO:0007669"/>
    <property type="project" value="UniProtKB-KW"/>
</dbReference>
<dbReference type="GO" id="GO:0005246">
    <property type="term" value="F:calcium channel regulator activity"/>
    <property type="evidence" value="ECO:0007669"/>
    <property type="project" value="UniProtKB-KW"/>
</dbReference>
<dbReference type="GO" id="GO:0008200">
    <property type="term" value="F:ion channel inhibitor activity"/>
    <property type="evidence" value="ECO:0007669"/>
    <property type="project" value="InterPro"/>
</dbReference>
<dbReference type="GO" id="GO:0090729">
    <property type="term" value="F:toxin activity"/>
    <property type="evidence" value="ECO:0007669"/>
    <property type="project" value="UniProtKB-KW"/>
</dbReference>
<dbReference type="InterPro" id="IPR004214">
    <property type="entry name" value="Conotoxin"/>
</dbReference>
<dbReference type="InterPro" id="IPR012321">
    <property type="entry name" value="Conotoxin_omega-typ_CS"/>
</dbReference>
<dbReference type="Pfam" id="PF02950">
    <property type="entry name" value="Conotoxin"/>
    <property type="match status" value="1"/>
</dbReference>
<dbReference type="PROSITE" id="PS60004">
    <property type="entry name" value="OMEGA_CONOTOXIN"/>
    <property type="match status" value="1"/>
</dbReference>
<evidence type="ECO:0000250" key="1"/>
<evidence type="ECO:0000255" key="2"/>
<evidence type="ECO:0000305" key="3"/>
<keyword id="KW-0108">Calcium channel impairing toxin</keyword>
<keyword id="KW-1015">Disulfide bond</keyword>
<keyword id="KW-0872">Ion channel impairing toxin</keyword>
<keyword id="KW-0960">Knottin</keyword>
<keyword id="KW-0528">Neurotoxin</keyword>
<keyword id="KW-0638">Presynaptic neurotoxin</keyword>
<keyword id="KW-0964">Secreted</keyword>
<keyword id="KW-0732">Signal</keyword>
<keyword id="KW-0800">Toxin</keyword>
<keyword id="KW-1218">Voltage-gated calcium channel impairing toxin</keyword>
<accession>Q5K0D6</accession>
<reference key="1">
    <citation type="journal article" date="2005" name="Peptides">
        <title>Direct cDNA cloning of novel conopeptide precursors of the O-superfamily.</title>
        <authorList>
            <person name="Kauferstein S."/>
            <person name="Melaun C."/>
            <person name="Mebs D."/>
        </authorList>
    </citation>
    <scope>NUCLEOTIDE SEQUENCE [MRNA]</scope>
    <source>
        <tissue>Venom duct</tissue>
    </source>
</reference>
<organism>
    <name type="scientific">Conus striatus</name>
    <name type="common">Striated cone</name>
    <dbReference type="NCBI Taxonomy" id="6493"/>
    <lineage>
        <taxon>Eukaryota</taxon>
        <taxon>Metazoa</taxon>
        <taxon>Spiralia</taxon>
        <taxon>Lophotrochozoa</taxon>
        <taxon>Mollusca</taxon>
        <taxon>Gastropoda</taxon>
        <taxon>Caenogastropoda</taxon>
        <taxon>Neogastropoda</taxon>
        <taxon>Conoidea</taxon>
        <taxon>Conidae</taxon>
        <taxon>Conus</taxon>
        <taxon>Pionoconus</taxon>
    </lineage>
</organism>
<protein>
    <recommendedName>
        <fullName>Omega-conotoxin-like 12</fullName>
    </recommendedName>
</protein>
<proteinExistence type="evidence at transcript level"/>
<sequence>MKLTCVVIVAVLLLTACQLITADDSRGTQKHRSLRSTTKVSKATDCIEAGNYCGPTVMKICCGFCSPYSKICMNYPKN</sequence>
<name>O16C_CONST</name>